<proteinExistence type="inferred from homology"/>
<reference key="1">
    <citation type="submission" date="2005-08" db="EMBL/GenBank/DDBJ databases">
        <title>Complete sequence of chromosome 1 of Nitrosospira multiformis ATCC 25196.</title>
        <authorList>
            <person name="Copeland A."/>
            <person name="Lucas S."/>
            <person name="Lapidus A."/>
            <person name="Barry K."/>
            <person name="Detter J.C."/>
            <person name="Glavina T."/>
            <person name="Hammon N."/>
            <person name="Israni S."/>
            <person name="Pitluck S."/>
            <person name="Chain P."/>
            <person name="Malfatti S."/>
            <person name="Shin M."/>
            <person name="Vergez L."/>
            <person name="Schmutz J."/>
            <person name="Larimer F."/>
            <person name="Land M."/>
            <person name="Hauser L."/>
            <person name="Kyrpides N."/>
            <person name="Lykidis A."/>
            <person name="Richardson P."/>
        </authorList>
    </citation>
    <scope>NUCLEOTIDE SEQUENCE [LARGE SCALE GENOMIC DNA]</scope>
    <source>
        <strain>ATCC 25196 / NCIMB 11849 / C 71</strain>
    </source>
</reference>
<feature type="chain" id="PRO_0000264797" description="RNA 3'-terminal phosphate cyclase">
    <location>
        <begin position="1"/>
        <end position="353"/>
    </location>
</feature>
<feature type="active site" description="Tele-AMP-histidine intermediate" evidence="1">
    <location>
        <position position="311"/>
    </location>
</feature>
<feature type="binding site" evidence="1">
    <location>
        <position position="100"/>
    </location>
    <ligand>
        <name>ATP</name>
        <dbReference type="ChEBI" id="CHEBI:30616"/>
    </ligand>
</feature>
<feature type="binding site" evidence="1">
    <location>
        <begin position="285"/>
        <end position="289"/>
    </location>
    <ligand>
        <name>ATP</name>
        <dbReference type="ChEBI" id="CHEBI:30616"/>
    </ligand>
</feature>
<accession>Q2Y720</accession>
<organism>
    <name type="scientific">Nitrosospira multiformis (strain ATCC 25196 / NCIMB 11849 / C 71)</name>
    <dbReference type="NCBI Taxonomy" id="323848"/>
    <lineage>
        <taxon>Bacteria</taxon>
        <taxon>Pseudomonadati</taxon>
        <taxon>Pseudomonadota</taxon>
        <taxon>Betaproteobacteria</taxon>
        <taxon>Nitrosomonadales</taxon>
        <taxon>Nitrosomonadaceae</taxon>
        <taxon>Nitrosospira</taxon>
    </lineage>
</organism>
<keyword id="KW-0067">ATP-binding</keyword>
<keyword id="KW-0963">Cytoplasm</keyword>
<keyword id="KW-0436">Ligase</keyword>
<keyword id="KW-0547">Nucleotide-binding</keyword>
<keyword id="KW-1185">Reference proteome</keyword>
<protein>
    <recommendedName>
        <fullName evidence="1">RNA 3'-terminal phosphate cyclase</fullName>
        <shortName evidence="1">RNA cyclase</shortName>
        <shortName evidence="1">RNA-3'-phosphate cyclase</shortName>
        <ecNumber evidence="1">6.5.1.4</ecNumber>
    </recommendedName>
</protein>
<dbReference type="EC" id="6.5.1.4" evidence="1"/>
<dbReference type="EMBL" id="CP000103">
    <property type="protein sequence ID" value="ABB75451.1"/>
    <property type="molecule type" value="Genomic_DNA"/>
</dbReference>
<dbReference type="RefSeq" id="WP_011381460.1">
    <property type="nucleotide sequence ID" value="NC_007614.1"/>
</dbReference>
<dbReference type="SMR" id="Q2Y720"/>
<dbReference type="STRING" id="323848.Nmul_A2158"/>
<dbReference type="KEGG" id="nmu:Nmul_A2158"/>
<dbReference type="eggNOG" id="COG0430">
    <property type="taxonomic scope" value="Bacteria"/>
</dbReference>
<dbReference type="HOGENOM" id="CLU_027882_0_0_4"/>
<dbReference type="OrthoDB" id="9789235at2"/>
<dbReference type="Proteomes" id="UP000002718">
    <property type="component" value="Chromosome"/>
</dbReference>
<dbReference type="GO" id="GO:0005737">
    <property type="term" value="C:cytoplasm"/>
    <property type="evidence" value="ECO:0007669"/>
    <property type="project" value="UniProtKB-SubCell"/>
</dbReference>
<dbReference type="GO" id="GO:0005524">
    <property type="term" value="F:ATP binding"/>
    <property type="evidence" value="ECO:0007669"/>
    <property type="project" value="UniProtKB-KW"/>
</dbReference>
<dbReference type="GO" id="GO:0003963">
    <property type="term" value="F:RNA-3'-phosphate cyclase activity"/>
    <property type="evidence" value="ECO:0007669"/>
    <property type="project" value="UniProtKB-UniRule"/>
</dbReference>
<dbReference type="GO" id="GO:0006396">
    <property type="term" value="P:RNA processing"/>
    <property type="evidence" value="ECO:0007669"/>
    <property type="project" value="InterPro"/>
</dbReference>
<dbReference type="Gene3D" id="3.65.10.20">
    <property type="entry name" value="RNA 3'-terminal phosphate cyclase domain"/>
    <property type="match status" value="1"/>
</dbReference>
<dbReference type="Gene3D" id="3.30.360.20">
    <property type="entry name" value="RNA 3'-terminal phosphate cyclase, insert domain"/>
    <property type="match status" value="1"/>
</dbReference>
<dbReference type="HAMAP" id="MF_00200">
    <property type="entry name" value="RTC"/>
    <property type="match status" value="1"/>
</dbReference>
<dbReference type="InterPro" id="IPR013791">
    <property type="entry name" value="RNA3'-term_phos_cycl_insert"/>
</dbReference>
<dbReference type="InterPro" id="IPR023797">
    <property type="entry name" value="RNA3'_phos_cyclase_dom"/>
</dbReference>
<dbReference type="InterPro" id="IPR037136">
    <property type="entry name" value="RNA3'_phos_cyclase_dom_sf"/>
</dbReference>
<dbReference type="InterPro" id="IPR000228">
    <property type="entry name" value="RNA3'_term_phos_cyc"/>
</dbReference>
<dbReference type="InterPro" id="IPR017770">
    <property type="entry name" value="RNA3'_term_phos_cyc_type_1"/>
</dbReference>
<dbReference type="InterPro" id="IPR020719">
    <property type="entry name" value="RNA3'_term_phos_cycl-like_CS"/>
</dbReference>
<dbReference type="InterPro" id="IPR013792">
    <property type="entry name" value="RNA3'P_cycl/enolpyr_Trfase_a/b"/>
</dbReference>
<dbReference type="InterPro" id="IPR036553">
    <property type="entry name" value="RPTC_insert"/>
</dbReference>
<dbReference type="NCBIfam" id="TIGR03399">
    <property type="entry name" value="RNA_3prim_cycl"/>
    <property type="match status" value="1"/>
</dbReference>
<dbReference type="PANTHER" id="PTHR11096">
    <property type="entry name" value="RNA 3' TERMINAL PHOSPHATE CYCLASE"/>
    <property type="match status" value="1"/>
</dbReference>
<dbReference type="PANTHER" id="PTHR11096:SF0">
    <property type="entry name" value="RNA 3'-TERMINAL PHOSPHATE CYCLASE"/>
    <property type="match status" value="1"/>
</dbReference>
<dbReference type="Pfam" id="PF01137">
    <property type="entry name" value="RTC"/>
    <property type="match status" value="1"/>
</dbReference>
<dbReference type="Pfam" id="PF05189">
    <property type="entry name" value="RTC_insert"/>
    <property type="match status" value="1"/>
</dbReference>
<dbReference type="PIRSF" id="PIRSF005378">
    <property type="entry name" value="RNA3'_term_phos_cycl_euk"/>
    <property type="match status" value="1"/>
</dbReference>
<dbReference type="SUPFAM" id="SSF55205">
    <property type="entry name" value="EPT/RTPC-like"/>
    <property type="match status" value="1"/>
</dbReference>
<dbReference type="SUPFAM" id="SSF52913">
    <property type="entry name" value="RNA 3'-terminal phosphate cyclase, RPTC, insert domain"/>
    <property type="match status" value="1"/>
</dbReference>
<dbReference type="PROSITE" id="PS01287">
    <property type="entry name" value="RTC"/>
    <property type="match status" value="1"/>
</dbReference>
<evidence type="ECO:0000255" key="1">
    <source>
        <dbReference type="HAMAP-Rule" id="MF_00200"/>
    </source>
</evidence>
<comment type="function">
    <text evidence="1">Catalyzes the conversion of 3'-phosphate to a 2',3'-cyclic phosphodiester at the end of RNA. The mechanism of action of the enzyme occurs in 3 steps: (A) adenylation of the enzyme by ATP; (B) transfer of adenylate to an RNA-N3'P to produce RNA-N3'PP5'A; (C) and attack of the adjacent 2'-hydroxyl on the 3'-phosphorus in the diester linkage to produce the cyclic end product. The biological role of this enzyme is unknown but it is likely to function in some aspects of cellular RNA processing.</text>
</comment>
<comment type="catalytic activity">
    <reaction evidence="1">
        <text>a 3'-end 3'-phospho-ribonucleotide-RNA + ATP = a 3'-end 2',3'-cyclophospho-ribonucleotide-RNA + AMP + diphosphate</text>
        <dbReference type="Rhea" id="RHEA:23976"/>
        <dbReference type="Rhea" id="RHEA-COMP:10463"/>
        <dbReference type="Rhea" id="RHEA-COMP:10464"/>
        <dbReference type="ChEBI" id="CHEBI:30616"/>
        <dbReference type="ChEBI" id="CHEBI:33019"/>
        <dbReference type="ChEBI" id="CHEBI:83062"/>
        <dbReference type="ChEBI" id="CHEBI:83064"/>
        <dbReference type="ChEBI" id="CHEBI:456215"/>
        <dbReference type="EC" id="6.5.1.4"/>
    </reaction>
</comment>
<comment type="subcellular location">
    <subcellularLocation>
        <location evidence="1">Cytoplasm</location>
    </subcellularLocation>
</comment>
<comment type="similarity">
    <text evidence="1">Belongs to the RNA 3'-terminal cyclase family. Type 1 subfamily.</text>
</comment>
<name>RTCA_NITMU</name>
<sequence length="353" mass="37750">MQEIDGSYGEGGGQLLRTSVALAAITGQSVRVYNIRAKRSNPGLAPQHLTAVKAVAALCRARTEGMEVKSQEIIFRPGPLRGGEYDFPIGTAGSVTLVLQAALPVALACGEKVRMNISGGTDVRAAPPLDYFRYVLLPLVYSMGARAKIEVLLRGYYPRGGGKVVVDVEPCLPLRPVLLNASEGLEGITGFVHISNLPKHIIHRMANGALAELSTFPTPAVGLEVFGKDDAIGEGGAVLLTAHKEHSRLGASAVAERGVPAERLGAEAGRCLREEILSGATLDIHAADQVLIYLALASGVSCFLTRELSSHAATTIWLLEQFLPVRFQVTQEAHLIRVRAKPEFNGMSSFLWR</sequence>
<gene>
    <name evidence="1" type="primary">rtcA</name>
    <name type="ordered locus">Nmul_A2158</name>
</gene>